<name>TTUA_PYRHO</name>
<keyword id="KW-0002">3D-structure</keyword>
<keyword id="KW-0004">4Fe-4S</keyword>
<keyword id="KW-0067">ATP-binding</keyword>
<keyword id="KW-1015">Disulfide bond</keyword>
<keyword id="KW-0408">Iron</keyword>
<keyword id="KW-0411">Iron-sulfur</keyword>
<keyword id="KW-0460">Magnesium</keyword>
<keyword id="KW-0479">Metal-binding</keyword>
<keyword id="KW-0547">Nucleotide-binding</keyword>
<keyword id="KW-0694">RNA-binding</keyword>
<keyword id="KW-0808">Transferase</keyword>
<keyword id="KW-0819">tRNA processing</keyword>
<keyword id="KW-0820">tRNA-binding</keyword>
<keyword id="KW-0862">Zinc</keyword>
<organism>
    <name type="scientific">Pyrococcus horikoshii (strain ATCC 700860 / DSM 12428 / JCM 9974 / NBRC 100139 / OT-3)</name>
    <dbReference type="NCBI Taxonomy" id="70601"/>
    <lineage>
        <taxon>Archaea</taxon>
        <taxon>Methanobacteriati</taxon>
        <taxon>Methanobacteriota</taxon>
        <taxon>Thermococci</taxon>
        <taxon>Thermococcales</taxon>
        <taxon>Thermococcaceae</taxon>
        <taxon>Pyrococcus</taxon>
    </lineage>
</organism>
<protein>
    <recommendedName>
        <fullName evidence="7">tRNA-5-methyluridine(54) 2-sulfurtransferase</fullName>
        <ecNumber evidence="3">2.8.1.-</ecNumber>
    </recommendedName>
    <alternativeName>
        <fullName evidence="4">tRNA thiouridine synthetase TtuA</fullName>
    </alternativeName>
</protein>
<proteinExistence type="evidence at protein level"/>
<feature type="chain" id="PRO_0000442361" description="tRNA-5-methyluridine(54) 2-sulfurtransferase">
    <location>
        <begin position="1"/>
        <end position="310"/>
    </location>
</feature>
<feature type="binding site" evidence="2 3 9">
    <location>
        <position position="3"/>
    </location>
    <ligand>
        <name>Zn(2+)</name>
        <dbReference type="ChEBI" id="CHEBI:29105"/>
        <label>1</label>
    </ligand>
</feature>
<feature type="binding site" evidence="2 3 9">
    <location>
        <position position="6"/>
    </location>
    <ligand>
        <name>Zn(2+)</name>
        <dbReference type="ChEBI" id="CHEBI:29105"/>
        <label>1</label>
    </ligand>
</feature>
<feature type="binding site" evidence="2 3 9">
    <location>
        <position position="22"/>
    </location>
    <ligand>
        <name>Zn(2+)</name>
        <dbReference type="ChEBI" id="CHEBI:29105"/>
        <label>1</label>
    </ligand>
</feature>
<feature type="binding site" evidence="2 3 9">
    <location>
        <position position="25"/>
    </location>
    <ligand>
        <name>Zn(2+)</name>
        <dbReference type="ChEBI" id="CHEBI:29105"/>
        <label>1</label>
    </ligand>
</feature>
<feature type="binding site" evidence="3">
    <location>
        <position position="53"/>
    </location>
    <ligand>
        <name>ATP</name>
        <dbReference type="ChEBI" id="CHEBI:30616"/>
    </ligand>
</feature>
<feature type="binding site" evidence="3">
    <location>
        <position position="79"/>
    </location>
    <ligand>
        <name>ATP</name>
        <dbReference type="ChEBI" id="CHEBI:30616"/>
    </ligand>
</feature>
<feature type="binding site" evidence="3">
    <location>
        <position position="128"/>
    </location>
    <ligand>
        <name>[4Fe-4S] cluster</name>
        <dbReference type="ChEBI" id="CHEBI:49883"/>
    </ligand>
</feature>
<feature type="binding site" evidence="3">
    <location>
        <position position="131"/>
    </location>
    <ligand>
        <name>[4Fe-4S] cluster</name>
        <dbReference type="ChEBI" id="CHEBI:49883"/>
    </ligand>
</feature>
<feature type="binding site" evidence="3">
    <location>
        <position position="135"/>
    </location>
    <ligand>
        <name>ATP</name>
        <dbReference type="ChEBI" id="CHEBI:30616"/>
    </ligand>
</feature>
<feature type="binding site" evidence="3">
    <location>
        <position position="154"/>
    </location>
    <ligand>
        <name>ATP</name>
        <dbReference type="ChEBI" id="CHEBI:30616"/>
    </ligand>
</feature>
<feature type="binding site" evidence="3">
    <location>
        <position position="220"/>
    </location>
    <ligand>
        <name>[4Fe-4S] cluster</name>
        <dbReference type="ChEBI" id="CHEBI:49883"/>
    </ligand>
</feature>
<feature type="binding site" evidence="2 3 9">
    <location>
        <position position="272"/>
    </location>
    <ligand>
        <name>Zn(2+)</name>
        <dbReference type="ChEBI" id="CHEBI:29105"/>
        <label>2</label>
    </ligand>
</feature>
<feature type="binding site" evidence="2 3 9">
    <location>
        <position position="275"/>
    </location>
    <ligand>
        <name>Zn(2+)</name>
        <dbReference type="ChEBI" id="CHEBI:29105"/>
        <label>2</label>
    </ligand>
</feature>
<feature type="binding site" evidence="2 3 9">
    <location>
        <position position="284"/>
    </location>
    <ligand>
        <name>Zn(2+)</name>
        <dbReference type="ChEBI" id="CHEBI:29105"/>
        <label>2</label>
    </ligand>
</feature>
<feature type="binding site" evidence="2 3 9">
    <location>
        <position position="287"/>
    </location>
    <ligand>
        <name>Zn(2+)</name>
        <dbReference type="ChEBI" id="CHEBI:29105"/>
        <label>2</label>
    </ligand>
</feature>
<feature type="disulfide bond" description="Alternate" evidence="2 3 9">
    <location>
        <begin position="128"/>
        <end position="220"/>
    </location>
</feature>
<feature type="mutagenesis site" description="Loss of binding to ATP." evidence="2">
    <original>D</original>
    <variation>A</variation>
    <location>
        <position position="59"/>
    </location>
</feature>
<feature type="strand" evidence="13">
    <location>
        <begin position="4"/>
        <end position="9"/>
    </location>
</feature>
<feature type="strand" evidence="13">
    <location>
        <begin position="12"/>
        <end position="14"/>
    </location>
</feature>
<feature type="turn" evidence="13">
    <location>
        <begin position="15"/>
        <end position="18"/>
    </location>
</feature>
<feature type="strand" evidence="13">
    <location>
        <begin position="19"/>
        <end position="21"/>
    </location>
</feature>
<feature type="helix" evidence="13">
    <location>
        <begin position="23"/>
        <end position="40"/>
    </location>
</feature>
<feature type="strand" evidence="13">
    <location>
        <begin position="48"/>
        <end position="53"/>
    </location>
</feature>
<feature type="helix" evidence="13">
    <location>
        <begin position="58"/>
        <end position="69"/>
    </location>
</feature>
<feature type="strand" evidence="13">
    <location>
        <begin position="73"/>
        <end position="80"/>
    </location>
</feature>
<feature type="turn" evidence="13">
    <location>
        <begin position="84"/>
        <end position="86"/>
    </location>
</feature>
<feature type="helix" evidence="13">
    <location>
        <begin position="87"/>
        <end position="101"/>
    </location>
</feature>
<feature type="strand" evidence="13">
    <location>
        <begin position="105"/>
        <end position="109"/>
    </location>
</feature>
<feature type="helix" evidence="13">
    <location>
        <begin position="110"/>
        <end position="114"/>
    </location>
</feature>
<feature type="turn" evidence="14">
    <location>
        <begin position="118"/>
        <end position="120"/>
    </location>
</feature>
<feature type="helix" evidence="13">
    <location>
        <begin position="127"/>
        <end position="145"/>
    </location>
</feature>
<feature type="strand" evidence="13">
    <location>
        <begin position="149"/>
        <end position="152"/>
    </location>
</feature>
<feature type="helix" evidence="13">
    <location>
        <begin position="157"/>
        <end position="169"/>
    </location>
</feature>
<feature type="helix" evidence="13">
    <location>
        <begin position="173"/>
        <end position="177"/>
    </location>
</feature>
<feature type="strand" evidence="13">
    <location>
        <begin position="180"/>
        <end position="183"/>
    </location>
</feature>
<feature type="strand" evidence="13">
    <location>
        <begin position="191"/>
        <end position="193"/>
    </location>
</feature>
<feature type="turn" evidence="13">
    <location>
        <begin position="195"/>
        <end position="198"/>
    </location>
</feature>
<feature type="helix" evidence="13">
    <location>
        <begin position="201"/>
        <end position="211"/>
    </location>
</feature>
<feature type="helix" evidence="13">
    <location>
        <begin position="228"/>
        <end position="241"/>
    </location>
</feature>
<feature type="helix" evidence="13">
    <location>
        <begin position="245"/>
        <end position="256"/>
    </location>
</feature>
<feature type="helix" evidence="13">
    <location>
        <begin position="257"/>
        <end position="260"/>
    </location>
</feature>
<feature type="helix" evidence="14">
    <location>
        <begin position="261"/>
        <end position="263"/>
    </location>
</feature>
<feature type="turn" evidence="13">
    <location>
        <begin position="273"/>
        <end position="275"/>
    </location>
</feature>
<feature type="strand" evidence="13">
    <location>
        <begin position="280"/>
        <end position="283"/>
    </location>
</feature>
<feature type="helix" evidence="13">
    <location>
        <begin position="285"/>
        <end position="290"/>
    </location>
</feature>
<feature type="strand" evidence="15">
    <location>
        <begin position="304"/>
        <end position="306"/>
    </location>
</feature>
<evidence type="ECO:0000250" key="1">
    <source>
        <dbReference type="UniProtKB" id="Q72LF3"/>
    </source>
</evidence>
<evidence type="ECO:0000269" key="2">
    <source>
    </source>
</evidence>
<evidence type="ECO:0000269" key="3">
    <source>
    </source>
</evidence>
<evidence type="ECO:0000303" key="4">
    <source>
    </source>
</evidence>
<evidence type="ECO:0000303" key="5">
    <source>
    </source>
</evidence>
<evidence type="ECO:0000305" key="6"/>
<evidence type="ECO:0000305" key="7">
    <source>
    </source>
</evidence>
<evidence type="ECO:0000312" key="8">
    <source>
        <dbReference type="EMBL" id="BAA29373.1"/>
    </source>
</evidence>
<evidence type="ECO:0007744" key="9">
    <source>
        <dbReference type="PDB" id="3VRH"/>
    </source>
</evidence>
<evidence type="ECO:0007744" key="10">
    <source>
        <dbReference type="PDB" id="5MKO"/>
    </source>
</evidence>
<evidence type="ECO:0007744" key="11">
    <source>
        <dbReference type="PDB" id="5MKP"/>
    </source>
</evidence>
<evidence type="ECO:0007744" key="12">
    <source>
        <dbReference type="PDB" id="5MKQ"/>
    </source>
</evidence>
<evidence type="ECO:0007829" key="13">
    <source>
        <dbReference type="PDB" id="3VRH"/>
    </source>
</evidence>
<evidence type="ECO:0007829" key="14">
    <source>
        <dbReference type="PDB" id="5MKO"/>
    </source>
</evidence>
<evidence type="ECO:0007829" key="15">
    <source>
        <dbReference type="PDB" id="5MKQ"/>
    </source>
</evidence>
<sequence>MKCKFCSREAYIKIHYPKMYLCEEHFKEYFERKVSRTIERYKLLTKDERILVAVSGGKDSAVTAYVLKKLGYNIECLHINLGISGYSEKSEEYAKKQCKLIGAPLHIVRIKEILGYGIGEVKTRRPPCSYCGLTKRYIMNKFAYDNGFDAIATGHNLDDEASFLLNNILHWNTEYLAKGGPILPQQGKFIKKVKPLYEVTEREVVAYALAVGLEYIVEECPYARGATTLDMKGVLNELEEKRPGTKFNFVRGYLKKKKLFEPEIKEKEIKECKICRMPSSGDICAFCKFWGLKKEINFKVSSTDEEPFGP</sequence>
<gene>
    <name evidence="4 5" type="primary">ttuA</name>
    <name evidence="8" type="ordered locus">PH0300</name>
</gene>
<reference key="1">
    <citation type="journal article" date="1998" name="DNA Res.">
        <title>Complete sequence and gene organization of the genome of a hyper-thermophilic archaebacterium, Pyrococcus horikoshii OT3.</title>
        <authorList>
            <person name="Kawarabayasi Y."/>
            <person name="Sawada M."/>
            <person name="Horikawa H."/>
            <person name="Haikawa Y."/>
            <person name="Hino Y."/>
            <person name="Yamamoto S."/>
            <person name="Sekine M."/>
            <person name="Baba S."/>
            <person name="Kosugi H."/>
            <person name="Hosoyama A."/>
            <person name="Nagai Y."/>
            <person name="Sakai M."/>
            <person name="Ogura K."/>
            <person name="Otsuka R."/>
            <person name="Nakazawa H."/>
            <person name="Takamiya M."/>
            <person name="Ohfuku Y."/>
            <person name="Funahashi T."/>
            <person name="Tanaka T."/>
            <person name="Kudoh Y."/>
            <person name="Yamazaki J."/>
            <person name="Kushida N."/>
            <person name="Oguchi A."/>
            <person name="Aoki K."/>
            <person name="Yoshizawa T."/>
            <person name="Nakamura Y."/>
            <person name="Robb F.T."/>
            <person name="Horikoshi K."/>
            <person name="Masuchi Y."/>
            <person name="Shizuya H."/>
            <person name="Kikuchi H."/>
        </authorList>
    </citation>
    <scope>NUCLEOTIDE SEQUENCE [LARGE SCALE GENOMIC DNA]</scope>
    <source>
        <strain>ATCC 700860 / DSM 12428 / JCM 9974 / NBRC 100139 / OT-3</strain>
    </source>
</reference>
<reference evidence="9" key="2">
    <citation type="journal article" date="2013" name="Proteins">
        <title>Crystallographic and mutational studies on the tRNA thiouridine synthetase TtuA.</title>
        <authorList>
            <person name="Nakagawa H."/>
            <person name="Kuratani M."/>
            <person name="Goto-Ito S."/>
            <person name="Ito T."/>
            <person name="Katsura K."/>
            <person name="Terada T."/>
            <person name="Shirouzu M."/>
            <person name="Sekine S."/>
            <person name="Shigi N."/>
            <person name="Yokoyama S."/>
        </authorList>
    </citation>
    <scope>X-RAY CRYSTALLOGRAPHY (2.10 ANGSTROMS) IN COMPLEX WITH ZINC</scope>
    <scope>DISULFIDE BOND</scope>
    <scope>SUBUNIT</scope>
    <scope>ATP-BINDING</scope>
    <scope>MUTAGENESIS OF ASP-59</scope>
</reference>
<reference evidence="10 11 12" key="3">
    <citation type="journal article" date="2017" name="Proc. Natl. Acad. Sci. U.S.A.">
        <title>Nonredox thiolation in tRNA occurring via sulfur activation by a [4Fe-4S] cluster.</title>
        <authorList>
            <person name="Arragain S."/>
            <person name="Bimai O."/>
            <person name="Legrand P."/>
            <person name="Caillat S."/>
            <person name="Ravanat J.L."/>
            <person name="Touati N."/>
            <person name="Binet L."/>
            <person name="Atta M."/>
            <person name="Fontecave M."/>
            <person name="Golinelli-Pimpaneau B."/>
        </authorList>
    </citation>
    <scope>X-RAY CRYSTALLOGRAPHY (2.50 ANGSTROMS) IN COMPLEXES WITH AMP; ZINC AND 4FE-4S CLUSTER</scope>
    <scope>FUNCTION</scope>
    <scope>CATALYTIC ACTIVITY</scope>
    <scope>COFACTOR</scope>
    <scope>SUBUNIT</scope>
    <scope>DISULFIDE BOND</scope>
    <scope>REACTION MECHANISM</scope>
    <scope>PATHWAY</scope>
</reference>
<accession>O58038</accession>
<dbReference type="EC" id="2.8.1.-" evidence="3"/>
<dbReference type="EMBL" id="BA000001">
    <property type="protein sequence ID" value="BAA29373.1"/>
    <property type="molecule type" value="Genomic_DNA"/>
</dbReference>
<dbReference type="PIR" id="F71455">
    <property type="entry name" value="F71455"/>
</dbReference>
<dbReference type="RefSeq" id="WP_010884395.1">
    <property type="nucleotide sequence ID" value="NC_000961.1"/>
</dbReference>
<dbReference type="PDB" id="3VRH">
    <property type="method" value="X-ray"/>
    <property type="resolution" value="2.10 A"/>
    <property type="chains" value="A=1-310"/>
</dbReference>
<dbReference type="PDB" id="5MKO">
    <property type="method" value="X-ray"/>
    <property type="resolution" value="2.65 A"/>
    <property type="chains" value="A/B=1-310"/>
</dbReference>
<dbReference type="PDB" id="5MKP">
    <property type="method" value="X-ray"/>
    <property type="resolution" value="2.50 A"/>
    <property type="chains" value="A=1-310"/>
</dbReference>
<dbReference type="PDB" id="5MKQ">
    <property type="method" value="X-ray"/>
    <property type="resolution" value="2.79 A"/>
    <property type="chains" value="A/B=1-310"/>
</dbReference>
<dbReference type="PDBsum" id="3VRH"/>
<dbReference type="PDBsum" id="5MKO"/>
<dbReference type="PDBsum" id="5MKP"/>
<dbReference type="PDBsum" id="5MKQ"/>
<dbReference type="SMR" id="O58038"/>
<dbReference type="STRING" id="70601.gene:9377217"/>
<dbReference type="EnsemblBacteria" id="BAA29373">
    <property type="protein sequence ID" value="BAA29373"/>
    <property type="gene ID" value="BAA29373"/>
</dbReference>
<dbReference type="GeneID" id="1444182"/>
<dbReference type="KEGG" id="pho:PH0300"/>
<dbReference type="eggNOG" id="arCOG00042">
    <property type="taxonomic scope" value="Archaea"/>
</dbReference>
<dbReference type="OrthoDB" id="33422at2157"/>
<dbReference type="BRENDA" id="2.8.1.15">
    <property type="organism ID" value="5244"/>
</dbReference>
<dbReference type="EvolutionaryTrace" id="O58038"/>
<dbReference type="Proteomes" id="UP000000752">
    <property type="component" value="Chromosome"/>
</dbReference>
<dbReference type="GO" id="GO:0002144">
    <property type="term" value="C:cytosolic tRNA wobble base thiouridylase complex"/>
    <property type="evidence" value="ECO:0007669"/>
    <property type="project" value="TreeGrafter"/>
</dbReference>
<dbReference type="GO" id="GO:0051539">
    <property type="term" value="F:4 iron, 4 sulfur cluster binding"/>
    <property type="evidence" value="ECO:0007669"/>
    <property type="project" value="UniProtKB-KW"/>
</dbReference>
<dbReference type="GO" id="GO:0005524">
    <property type="term" value="F:ATP binding"/>
    <property type="evidence" value="ECO:0007669"/>
    <property type="project" value="UniProtKB-KW"/>
</dbReference>
<dbReference type="GO" id="GO:0046872">
    <property type="term" value="F:metal ion binding"/>
    <property type="evidence" value="ECO:0007669"/>
    <property type="project" value="UniProtKB-KW"/>
</dbReference>
<dbReference type="GO" id="GO:0016740">
    <property type="term" value="F:transferase activity"/>
    <property type="evidence" value="ECO:0007669"/>
    <property type="project" value="UniProtKB-KW"/>
</dbReference>
<dbReference type="GO" id="GO:0000049">
    <property type="term" value="F:tRNA binding"/>
    <property type="evidence" value="ECO:0007669"/>
    <property type="project" value="UniProtKB-KW"/>
</dbReference>
<dbReference type="GO" id="GO:0002143">
    <property type="term" value="P:tRNA wobble position uridine thiolation"/>
    <property type="evidence" value="ECO:0007669"/>
    <property type="project" value="TreeGrafter"/>
</dbReference>
<dbReference type="CDD" id="cd01993">
    <property type="entry name" value="TtuA-like"/>
    <property type="match status" value="1"/>
</dbReference>
<dbReference type="FunFam" id="3.40.50.620:FF:000174">
    <property type="entry name" value="ATPase, PP-loop superfamily"/>
    <property type="match status" value="1"/>
</dbReference>
<dbReference type="Gene3D" id="3.40.50.620">
    <property type="entry name" value="HUPs"/>
    <property type="match status" value="1"/>
</dbReference>
<dbReference type="InterPro" id="IPR000541">
    <property type="entry name" value="Ncs6/Tuc1/Ctu1"/>
</dbReference>
<dbReference type="InterPro" id="IPR001763">
    <property type="entry name" value="Rhodanese-like_dom"/>
</dbReference>
<dbReference type="InterPro" id="IPR014729">
    <property type="entry name" value="Rossmann-like_a/b/a_fold"/>
</dbReference>
<dbReference type="InterPro" id="IPR011063">
    <property type="entry name" value="TilS/TtcA_N"/>
</dbReference>
<dbReference type="InterPro" id="IPR035107">
    <property type="entry name" value="tRNA_thiolation_TtcA_Ctu1"/>
</dbReference>
<dbReference type="InterPro" id="IPR054306">
    <property type="entry name" value="TtuA-like_LIM_N"/>
</dbReference>
<dbReference type="NCBIfam" id="TIGR00269">
    <property type="entry name" value="TIGR00269 family protein"/>
    <property type="match status" value="1"/>
</dbReference>
<dbReference type="PANTHER" id="PTHR11807">
    <property type="entry name" value="ATPASES OF THE PP SUPERFAMILY-RELATED"/>
    <property type="match status" value="1"/>
</dbReference>
<dbReference type="PANTHER" id="PTHR11807:SF27">
    <property type="entry name" value="TRNA-5-METHYLURIDINE(54) 2-SULFURTRANSFERASE"/>
    <property type="match status" value="1"/>
</dbReference>
<dbReference type="Pfam" id="PF01171">
    <property type="entry name" value="ATP_bind_3"/>
    <property type="match status" value="1"/>
</dbReference>
<dbReference type="Pfam" id="PF22082">
    <property type="entry name" value="TtuA_LIM_N"/>
    <property type="match status" value="1"/>
</dbReference>
<dbReference type="PIRSF" id="PIRSF004976">
    <property type="entry name" value="ATPase_YdaO"/>
    <property type="match status" value="1"/>
</dbReference>
<dbReference type="SUPFAM" id="SSF52402">
    <property type="entry name" value="Adenine nucleotide alpha hydrolases-like"/>
    <property type="match status" value="1"/>
</dbReference>
<comment type="function">
    <text evidence="1 3">Catalyzes the ATP-dependent 2-thiolation of 5-methyluridine residue at position 54 in the T loop of tRNAs, leading to 5-methyl-2-thiouridine (m(5)s(2)U or s(2)T) (PubMed:28655838). This modification allows thermal stabilization of tRNAs in thermophilic microorganisms, and is required for cell growth at high temperatures (By similarity). Can use free sulfide as sulfur source in vitro, which may be also the sulfur source in vivo (PubMed:28655838).</text>
</comment>
<comment type="catalytic activity">
    <reaction evidence="3">
        <text>5-methyluridine(54) in tRNA + hydrogen sulfide + ATP = 5-methyl-2-thiouridine(54) in tRNA + AMP + diphosphate</text>
        <dbReference type="Rhea" id="RHEA:55188"/>
        <dbReference type="Rhea" id="RHEA-COMP:10167"/>
        <dbReference type="Rhea" id="RHEA-COMP:13344"/>
        <dbReference type="ChEBI" id="CHEBI:29919"/>
        <dbReference type="ChEBI" id="CHEBI:30616"/>
        <dbReference type="ChEBI" id="CHEBI:33019"/>
        <dbReference type="ChEBI" id="CHEBI:74447"/>
        <dbReference type="ChEBI" id="CHEBI:136799"/>
        <dbReference type="ChEBI" id="CHEBI:456215"/>
    </reaction>
</comment>
<comment type="cofactor">
    <cofactor evidence="3">
        <name>[4Fe-4S] cluster</name>
        <dbReference type="ChEBI" id="CHEBI:49883"/>
    </cofactor>
    <text evidence="3">Binds 1 [4Fe-4S] cluster per subunit. The cluster is chelated by three Cys residues, the fourth Fe with a free coordination site may bind a small ligand, such as exogenous sulfide, thus acting as a sulfur carrier.</text>
</comment>
<comment type="cofactor">
    <cofactor evidence="3">
        <name>Mg(2+)</name>
        <dbReference type="ChEBI" id="CHEBI:18420"/>
    </cofactor>
</comment>
<comment type="pathway">
    <text evidence="3">tRNA modification.</text>
</comment>
<comment type="subunit">
    <text evidence="2 3">Homodimer.</text>
</comment>
<comment type="miscellaneous">
    <text evidence="6">In TtuA from T.thermophilus, the sulfur inserted into the nucleoside comes from the C-terminal thiocarboxylate of TtuB, but there is no TtuB ortholog in P.horikoshii. Free sulfide has been shown to be present at relatively high concentrations within thermophilic archaea, and may be the sulfur source in vivo.</text>
</comment>
<comment type="miscellaneous">
    <text evidence="7">The thiolation reaction likely consists of two steps: a first activation step by ATP to form an adenylated intermediate of the target base of tRNA, and a second nucleophilic substitution step of the sulfur (S) atom supplied by the hydrosulfide attached to the Fe-S cluster.</text>
</comment>
<comment type="similarity">
    <text evidence="6">Belongs to the TtcA family. TtuA subfamily.</text>
</comment>